<gene>
    <name type="primary">CTNNA2</name>
</gene>
<proteinExistence type="evidence at transcript level"/>
<evidence type="ECO:0000250" key="1">
    <source>
        <dbReference type="UniProtKB" id="P26232"/>
    </source>
</evidence>
<evidence type="ECO:0000250" key="2">
    <source>
        <dbReference type="UniProtKB" id="P30997"/>
    </source>
</evidence>
<evidence type="ECO:0000250" key="3">
    <source>
        <dbReference type="UniProtKB" id="Q61301"/>
    </source>
</evidence>
<evidence type="ECO:0000256" key="4">
    <source>
        <dbReference type="SAM" id="MobiDB-lite"/>
    </source>
</evidence>
<evidence type="ECO:0000305" key="5"/>
<name>CTNA2_PONAB</name>
<comment type="function">
    <text evidence="1 3">May function as a linker between cadherin adhesion receptors and the cytoskeleton to regulate cell-cell adhesion and differentiation in the nervous system. Required for proper regulation of cortical neuronal migration and neurite growth. It acts as a negative regulator of Arp2/3 complex activity and Arp2/3-mediated actin polymerization. It thereby suppresses excessive actin branching which would impair neurite growth and stability. Regulates morphological plasticity of synapses and cerebellar and hippocampal lamination during development. Functions in the control of startle modulation.</text>
</comment>
<comment type="subunit">
    <text evidence="1 2">Interacts with CDH1 and CDH2 (By similarity). Interacts with ZNF639; recruits CTNNA2 to the nucleus (By similarity). Interacts with F-actin (By similarity).</text>
</comment>
<comment type="subcellular location">
    <subcellularLocation>
        <location evidence="3">Cell membrane</location>
        <topology evidence="3">Peripheral membrane protein</topology>
        <orientation evidence="3">Cytoplasmic side</orientation>
    </subcellularLocation>
    <subcellularLocation>
        <location evidence="3">Cytoplasm</location>
    </subcellularLocation>
    <subcellularLocation>
        <location evidence="3">Cytoplasm</location>
        <location evidence="3">Cytoskeleton</location>
    </subcellularLocation>
    <subcellularLocation>
        <location evidence="3">Cell junction</location>
        <location evidence="3">Adherens junction</location>
    </subcellularLocation>
    <subcellularLocation>
        <location evidence="3">Cell projection</location>
        <location evidence="3">Axon</location>
    </subcellularLocation>
    <subcellularLocation>
        <location evidence="1">Nucleus</location>
    </subcellularLocation>
</comment>
<comment type="similarity">
    <text evidence="5">Belongs to the vinculin/alpha-catenin family.</text>
</comment>
<protein>
    <recommendedName>
        <fullName>Catenin alpha-2</fullName>
    </recommendedName>
    <alternativeName>
        <fullName>Alpha N-catenin</fullName>
    </alternativeName>
</protein>
<sequence length="905" mass="100447">MTSATSPIILKWDPKSLEIRTLTVERLLEPLVTQVTTLVNTSNKGPSGKKKGRSKKAHVLAASVEQATQNFLEKGEQIAKESQDLKEELVAAVEDVRKQGETMRIASSEFADDPCSSVKRGTMVRAARALLSAVTRLLILADMADVMRLLSHLKIVEEALEAVKNATNEQDLANRFKEFGKEMVKLNYVAARRQQELKDPHCRDEMAAARGALKKNATMLYTASQAFLRHPDVAATRANRDYVFKQVQEAIAGISNAAQATSPTDEAKGHTGIGELAAALNEFDNKIILDPMTFSEARFRPSLEERLESIISGAALMADSSCTRDDRRERIVAECNAVRQALQDLLSEYMNNTGRKEKGDPLNIAIDKMTKKTRDLRRQLRKAVMDHISDSFLETNVPLLVLIEAAKSGNEKEVKEYAQVFREHANKLVEVANLACSISNNEEGVKLVRMAATQIDSLCPQVINAALTLAARPQSKVAQDNMDVFKDQWEKQVRVLTEAVDDITSVDDFLSVSENHILEDVNKCVIALQEGDVDTLDRTAGAIRGRAARVIHIINAEMENYEAGVYTEKVLEATKLLSETVMPRFAEQVEVAIEALSANVPQPFEENEFIDASRLVYDGVRDIRKAVLMIRTPEELEDDSDFEQEDYDVRSRTSVQTEDDQLIAGQSARAIMAQLPQEEKAKIAEQVEIFHQEKSKLDAEVAKWDDSGNDIIVLAKQMCMIMMEMTDFTRGKGPLKNTSDVINAAKKIAEAGSRMDKLARAVADQCPDSACKQDLLAYLQRIALYCHQLNICSKVKAEVQNLGGELIVSGLDSATSLIQAAKNLMNAVVLTVKASYVASTKYQKVYGTAAVNSPVVSWKMKAPEKKPLVKREKPEEFQTRVRRGSQKKHISPVQALSEFKAMDSF</sequence>
<organism>
    <name type="scientific">Pongo abelii</name>
    <name type="common">Sumatran orangutan</name>
    <name type="synonym">Pongo pygmaeus abelii</name>
    <dbReference type="NCBI Taxonomy" id="9601"/>
    <lineage>
        <taxon>Eukaryota</taxon>
        <taxon>Metazoa</taxon>
        <taxon>Chordata</taxon>
        <taxon>Craniata</taxon>
        <taxon>Vertebrata</taxon>
        <taxon>Euteleostomi</taxon>
        <taxon>Mammalia</taxon>
        <taxon>Eutheria</taxon>
        <taxon>Euarchontoglires</taxon>
        <taxon>Primates</taxon>
        <taxon>Haplorrhini</taxon>
        <taxon>Catarrhini</taxon>
        <taxon>Hominidae</taxon>
        <taxon>Pongo</taxon>
    </lineage>
</organism>
<accession>Q5R416</accession>
<accession>Q5R4P9</accession>
<feature type="chain" id="PRO_0000248839" description="Catenin alpha-2">
    <location>
        <begin position="1"/>
        <end position="905"/>
    </location>
</feature>
<feature type="region of interest" description="Disordered" evidence="4">
    <location>
        <begin position="869"/>
        <end position="891"/>
    </location>
</feature>
<feature type="compositionally biased region" description="Basic and acidic residues" evidence="4">
    <location>
        <begin position="869"/>
        <end position="879"/>
    </location>
</feature>
<feature type="compositionally biased region" description="Basic residues" evidence="4">
    <location>
        <begin position="880"/>
        <end position="890"/>
    </location>
</feature>
<feature type="modified residue" description="Phosphothreonine" evidence="3">
    <location>
        <position position="632"/>
    </location>
</feature>
<feature type="modified residue" description="Phosphoserine" evidence="1">
    <location>
        <position position="640"/>
    </location>
</feature>
<feature type="modified residue" description="Phosphoserine" evidence="3">
    <location>
        <position position="651"/>
    </location>
</feature>
<feature type="modified residue" description="Phosphoserine" evidence="3">
    <location>
        <position position="853"/>
    </location>
</feature>
<feature type="modified residue" description="Phosphoserine" evidence="3">
    <location>
        <position position="891"/>
    </location>
</feature>
<feature type="sequence conflict" description="In Ref. 1; CAH93267." evidence="5" ref="1">
    <original>N</original>
    <variation>I</variation>
    <location>
        <position position="285"/>
    </location>
</feature>
<feature type="sequence conflict" description="In Ref. 1; CAH93267." evidence="5" ref="1">
    <original>K</original>
    <variation>R</variation>
    <location>
        <position position="569"/>
    </location>
</feature>
<feature type="sequence conflict" description="In Ref. 1; CAH93267." evidence="5" ref="1">
    <original>Q</original>
    <variation>R</variation>
    <location>
        <position position="666"/>
    </location>
</feature>
<keyword id="KW-0130">Cell adhesion</keyword>
<keyword id="KW-0965">Cell junction</keyword>
<keyword id="KW-1003">Cell membrane</keyword>
<keyword id="KW-0966">Cell projection</keyword>
<keyword id="KW-0963">Cytoplasm</keyword>
<keyword id="KW-0206">Cytoskeleton</keyword>
<keyword id="KW-0217">Developmental protein</keyword>
<keyword id="KW-0221">Differentiation</keyword>
<keyword id="KW-0472">Membrane</keyword>
<keyword id="KW-0539">Nucleus</keyword>
<keyword id="KW-0597">Phosphoprotein</keyword>
<keyword id="KW-1185">Reference proteome</keyword>
<reference key="1">
    <citation type="submission" date="2004-11" db="EMBL/GenBank/DDBJ databases">
        <authorList>
            <consortium name="The German cDNA consortium"/>
        </authorList>
    </citation>
    <scope>NUCLEOTIDE SEQUENCE [LARGE SCALE MRNA]</scope>
    <source>
        <tissue>Brain cortex</tissue>
    </source>
</reference>
<dbReference type="EMBL" id="CR861196">
    <property type="protein sequence ID" value="CAH93267.1"/>
    <property type="molecule type" value="mRNA"/>
</dbReference>
<dbReference type="EMBL" id="CR861444">
    <property type="protein sequence ID" value="CAH93500.1"/>
    <property type="molecule type" value="mRNA"/>
</dbReference>
<dbReference type="RefSeq" id="NP_001127048.1">
    <property type="nucleotide sequence ID" value="NM_001133576.1"/>
</dbReference>
<dbReference type="SMR" id="Q5R416"/>
<dbReference type="FunCoup" id="Q5R416">
    <property type="interactions" value="1205"/>
</dbReference>
<dbReference type="STRING" id="9601.ENSPPYP00000013655"/>
<dbReference type="Ensembl" id="ENSPPYT00000034973.1">
    <property type="protein sequence ID" value="ENSPPYP00000042775.1"/>
    <property type="gene ID" value="ENSPPYG00000012245.3"/>
</dbReference>
<dbReference type="GeneID" id="100174076"/>
<dbReference type="KEGG" id="pon:100174076"/>
<dbReference type="CTD" id="1496"/>
<dbReference type="eggNOG" id="KOG3681">
    <property type="taxonomic scope" value="Eukaryota"/>
</dbReference>
<dbReference type="GeneTree" id="ENSGT01030000234543"/>
<dbReference type="HOGENOM" id="CLU_015314_2_0_1"/>
<dbReference type="InParanoid" id="Q5R416"/>
<dbReference type="OrthoDB" id="6376697at2759"/>
<dbReference type="TreeFam" id="TF313686"/>
<dbReference type="Proteomes" id="UP000001595">
    <property type="component" value="Chromosome 2A"/>
</dbReference>
<dbReference type="GO" id="GO:0015629">
    <property type="term" value="C:actin cytoskeleton"/>
    <property type="evidence" value="ECO:0007669"/>
    <property type="project" value="InterPro"/>
</dbReference>
<dbReference type="GO" id="GO:0005912">
    <property type="term" value="C:adherens junction"/>
    <property type="evidence" value="ECO:0000250"/>
    <property type="project" value="UniProtKB"/>
</dbReference>
<dbReference type="GO" id="GO:0030424">
    <property type="term" value="C:axon"/>
    <property type="evidence" value="ECO:0000250"/>
    <property type="project" value="UniProtKB"/>
</dbReference>
<dbReference type="GO" id="GO:0016342">
    <property type="term" value="C:catenin complex"/>
    <property type="evidence" value="ECO:0007669"/>
    <property type="project" value="TreeGrafter"/>
</dbReference>
<dbReference type="GO" id="GO:0005737">
    <property type="term" value="C:cytoplasm"/>
    <property type="evidence" value="ECO:0000250"/>
    <property type="project" value="UniProtKB"/>
</dbReference>
<dbReference type="GO" id="GO:0005634">
    <property type="term" value="C:nucleus"/>
    <property type="evidence" value="ECO:0007669"/>
    <property type="project" value="UniProtKB-SubCell"/>
</dbReference>
<dbReference type="GO" id="GO:0051015">
    <property type="term" value="F:actin filament binding"/>
    <property type="evidence" value="ECO:0000250"/>
    <property type="project" value="UniProtKB"/>
</dbReference>
<dbReference type="GO" id="GO:0008013">
    <property type="term" value="F:beta-catenin binding"/>
    <property type="evidence" value="ECO:0007669"/>
    <property type="project" value="TreeGrafter"/>
</dbReference>
<dbReference type="GO" id="GO:0045296">
    <property type="term" value="F:cadherin binding"/>
    <property type="evidence" value="ECO:0007669"/>
    <property type="project" value="InterPro"/>
</dbReference>
<dbReference type="GO" id="GO:0005198">
    <property type="term" value="F:structural molecule activity"/>
    <property type="evidence" value="ECO:0007669"/>
    <property type="project" value="InterPro"/>
</dbReference>
<dbReference type="GO" id="GO:0007409">
    <property type="term" value="P:axonogenesis"/>
    <property type="evidence" value="ECO:0000250"/>
    <property type="project" value="UniProtKB"/>
</dbReference>
<dbReference type="GO" id="GO:0048854">
    <property type="term" value="P:brain morphogenesis"/>
    <property type="evidence" value="ECO:0000250"/>
    <property type="project" value="UniProtKB"/>
</dbReference>
<dbReference type="GO" id="GO:0098609">
    <property type="term" value="P:cell-cell adhesion"/>
    <property type="evidence" value="ECO:0000250"/>
    <property type="project" value="UniProtKB"/>
</dbReference>
<dbReference type="GO" id="GO:0048813">
    <property type="term" value="P:dendrite morphogenesis"/>
    <property type="evidence" value="ECO:0000250"/>
    <property type="project" value="UniProtKB"/>
</dbReference>
<dbReference type="GO" id="GO:0034316">
    <property type="term" value="P:negative regulation of Arp2/3 complex-mediated actin nucleation"/>
    <property type="evidence" value="ECO:0000250"/>
    <property type="project" value="UniProtKB"/>
</dbReference>
<dbReference type="GO" id="GO:0060134">
    <property type="term" value="P:prepulse inhibition"/>
    <property type="evidence" value="ECO:0000250"/>
    <property type="project" value="UniProtKB"/>
</dbReference>
<dbReference type="GO" id="GO:0021942">
    <property type="term" value="P:radial glia guided migration of Purkinje cell"/>
    <property type="evidence" value="ECO:0000250"/>
    <property type="project" value="UniProtKB"/>
</dbReference>
<dbReference type="GO" id="GO:2001222">
    <property type="term" value="P:regulation of neuron migration"/>
    <property type="evidence" value="ECO:0000250"/>
    <property type="project" value="UniProtKB"/>
</dbReference>
<dbReference type="GO" id="GO:0010975">
    <property type="term" value="P:regulation of neuron projection development"/>
    <property type="evidence" value="ECO:0000250"/>
    <property type="project" value="UniProtKB"/>
</dbReference>
<dbReference type="GO" id="GO:0051823">
    <property type="term" value="P:regulation of synapse structural plasticity"/>
    <property type="evidence" value="ECO:0000250"/>
    <property type="project" value="UniProtKB"/>
</dbReference>
<dbReference type="FunFam" id="1.20.120.230:FF:000006">
    <property type="entry name" value="Catenin alpha 1"/>
    <property type="match status" value="1"/>
</dbReference>
<dbReference type="FunFam" id="1.20.120.230:FF:000007">
    <property type="entry name" value="Catenin alpha 1"/>
    <property type="match status" value="1"/>
</dbReference>
<dbReference type="FunFam" id="1.20.120.230:FF:000008">
    <property type="entry name" value="Catenin alpha 1"/>
    <property type="match status" value="1"/>
</dbReference>
<dbReference type="FunFam" id="1.20.120.230:FF:000011">
    <property type="entry name" value="Catenin alpha 1"/>
    <property type="match status" value="1"/>
</dbReference>
<dbReference type="Gene3D" id="6.10.250.2510">
    <property type="match status" value="1"/>
</dbReference>
<dbReference type="Gene3D" id="1.20.120.230">
    <property type="entry name" value="Alpha-catenin/vinculin-like"/>
    <property type="match status" value="5"/>
</dbReference>
<dbReference type="InterPro" id="IPR036723">
    <property type="entry name" value="Alpha-catenin/vinculin-like_sf"/>
</dbReference>
<dbReference type="InterPro" id="IPR001033">
    <property type="entry name" value="Alpha_catenin"/>
</dbReference>
<dbReference type="InterPro" id="IPR006077">
    <property type="entry name" value="Vinculin/catenin"/>
</dbReference>
<dbReference type="InterPro" id="IPR000633">
    <property type="entry name" value="Vinculin_CS"/>
</dbReference>
<dbReference type="PANTHER" id="PTHR18914">
    <property type="entry name" value="ALPHA CATENIN"/>
    <property type="match status" value="1"/>
</dbReference>
<dbReference type="PANTHER" id="PTHR18914:SF23">
    <property type="entry name" value="CATENIN ALPHA-2"/>
    <property type="match status" value="1"/>
</dbReference>
<dbReference type="Pfam" id="PF01044">
    <property type="entry name" value="Vinculin"/>
    <property type="match status" value="1"/>
</dbReference>
<dbReference type="PRINTS" id="PR00805">
    <property type="entry name" value="ALPHACATENIN"/>
</dbReference>
<dbReference type="SUPFAM" id="SSF47220">
    <property type="entry name" value="alpha-catenin/vinculin-like"/>
    <property type="match status" value="4"/>
</dbReference>
<dbReference type="PROSITE" id="PS00663">
    <property type="entry name" value="VINCULIN_1"/>
    <property type="match status" value="1"/>
</dbReference>